<proteinExistence type="inferred from homology"/>
<gene>
    <name evidence="1" type="primary">iolA2</name>
    <name type="ordered locus">BT9727_2297</name>
</gene>
<evidence type="ECO:0000255" key="1">
    <source>
        <dbReference type="HAMAP-Rule" id="MF_01670"/>
    </source>
</evidence>
<protein>
    <recommendedName>
        <fullName evidence="1">Malonate-semialdehyde dehydrogenase 2</fullName>
        <shortName evidence="1">MSA dehydrogenase 2</shortName>
        <ecNumber evidence="1">1.2.1.27</ecNumber>
    </recommendedName>
    <alternativeName>
        <fullName evidence="1">Methylmalonate-semialdehyde dehydrogenase 2</fullName>
        <shortName evidence="1">MMSA dehydrogenase 2</shortName>
        <shortName evidence="1">MSDH 2</shortName>
    </alternativeName>
</protein>
<dbReference type="EC" id="1.2.1.27" evidence="1"/>
<dbReference type="EMBL" id="AE017355">
    <property type="protein sequence ID" value="AAT59937.1"/>
    <property type="molecule type" value="Genomic_DNA"/>
</dbReference>
<dbReference type="RefSeq" id="WP_000218124.1">
    <property type="nucleotide sequence ID" value="NC_005957.1"/>
</dbReference>
<dbReference type="RefSeq" id="YP_036623.1">
    <property type="nucleotide sequence ID" value="NC_005957.1"/>
</dbReference>
<dbReference type="SMR" id="Q6HIK3"/>
<dbReference type="KEGG" id="btk:BT9727_2297"/>
<dbReference type="PATRIC" id="fig|281309.8.peg.2429"/>
<dbReference type="HOGENOM" id="CLU_005391_1_0_9"/>
<dbReference type="UniPathway" id="UPA00076">
    <property type="reaction ID" value="UER00148"/>
</dbReference>
<dbReference type="Proteomes" id="UP000001301">
    <property type="component" value="Chromosome"/>
</dbReference>
<dbReference type="GO" id="GO:0018478">
    <property type="term" value="F:malonate-semialdehyde dehydrogenase (acetylating) activity"/>
    <property type="evidence" value="ECO:0007669"/>
    <property type="project" value="UniProtKB-UniRule"/>
</dbReference>
<dbReference type="GO" id="GO:0004491">
    <property type="term" value="F:methylmalonate-semialdehyde dehydrogenase (acylating, NAD) activity"/>
    <property type="evidence" value="ECO:0007669"/>
    <property type="project" value="UniProtKB-UniRule"/>
</dbReference>
<dbReference type="GO" id="GO:0019310">
    <property type="term" value="P:inositol catabolic process"/>
    <property type="evidence" value="ECO:0007669"/>
    <property type="project" value="UniProtKB-UniRule"/>
</dbReference>
<dbReference type="GO" id="GO:0006210">
    <property type="term" value="P:thymine catabolic process"/>
    <property type="evidence" value="ECO:0007669"/>
    <property type="project" value="TreeGrafter"/>
</dbReference>
<dbReference type="GO" id="GO:0006574">
    <property type="term" value="P:valine catabolic process"/>
    <property type="evidence" value="ECO:0007669"/>
    <property type="project" value="TreeGrafter"/>
</dbReference>
<dbReference type="CDD" id="cd07085">
    <property type="entry name" value="ALDH_F6_MMSDH"/>
    <property type="match status" value="1"/>
</dbReference>
<dbReference type="FunFam" id="3.40.309.10:FF:000002">
    <property type="entry name" value="Methylmalonate-semialdehyde dehydrogenase (Acylating)"/>
    <property type="match status" value="1"/>
</dbReference>
<dbReference type="FunFam" id="3.40.605.10:FF:000003">
    <property type="entry name" value="Methylmalonate-semialdehyde dehydrogenase [acylating]"/>
    <property type="match status" value="1"/>
</dbReference>
<dbReference type="Gene3D" id="3.40.605.10">
    <property type="entry name" value="Aldehyde Dehydrogenase, Chain A, domain 1"/>
    <property type="match status" value="1"/>
</dbReference>
<dbReference type="Gene3D" id="3.40.309.10">
    <property type="entry name" value="Aldehyde Dehydrogenase, Chain A, domain 2"/>
    <property type="match status" value="1"/>
</dbReference>
<dbReference type="HAMAP" id="MF_01670">
    <property type="entry name" value="IolA"/>
    <property type="match status" value="1"/>
</dbReference>
<dbReference type="InterPro" id="IPR016161">
    <property type="entry name" value="Ald_DH/histidinol_DH"/>
</dbReference>
<dbReference type="InterPro" id="IPR016163">
    <property type="entry name" value="Ald_DH_C"/>
</dbReference>
<dbReference type="InterPro" id="IPR016160">
    <property type="entry name" value="Ald_DH_CS_CYS"/>
</dbReference>
<dbReference type="InterPro" id="IPR016162">
    <property type="entry name" value="Ald_DH_N"/>
</dbReference>
<dbReference type="InterPro" id="IPR015590">
    <property type="entry name" value="Aldehyde_DH_dom"/>
</dbReference>
<dbReference type="InterPro" id="IPR010061">
    <property type="entry name" value="MeMal-semiAld_DH"/>
</dbReference>
<dbReference type="InterPro" id="IPR023510">
    <property type="entry name" value="MSDH_GmP_bac"/>
</dbReference>
<dbReference type="NCBIfam" id="TIGR01722">
    <property type="entry name" value="MMSDH"/>
    <property type="match status" value="1"/>
</dbReference>
<dbReference type="PANTHER" id="PTHR43866">
    <property type="entry name" value="MALONATE-SEMIALDEHYDE DEHYDROGENASE"/>
    <property type="match status" value="1"/>
</dbReference>
<dbReference type="PANTHER" id="PTHR43866:SF4">
    <property type="entry name" value="MALONATE-SEMIALDEHYDE DEHYDROGENASE"/>
    <property type="match status" value="1"/>
</dbReference>
<dbReference type="Pfam" id="PF00171">
    <property type="entry name" value="Aldedh"/>
    <property type="match status" value="1"/>
</dbReference>
<dbReference type="SUPFAM" id="SSF53720">
    <property type="entry name" value="ALDH-like"/>
    <property type="match status" value="1"/>
</dbReference>
<dbReference type="PROSITE" id="PS00070">
    <property type="entry name" value="ALDEHYDE_DEHYDR_CYS"/>
    <property type="match status" value="1"/>
</dbReference>
<comment type="function">
    <text evidence="1">Catalyzes the oxidation of malonate semialdehyde (MSA) and methylmalonate semialdehyde (MMSA) into acetyl-CoA and propanoyl-CoA, respectively. Is involved in a myo-inositol catabolic pathway. Bicarbonate, and not CO2, is the end-product of the enzymatic reaction.</text>
</comment>
<comment type="catalytic activity">
    <reaction evidence="1">
        <text>3-oxopropanoate + NAD(+) + CoA + H2O = hydrogencarbonate + acetyl-CoA + NADH + H(+)</text>
        <dbReference type="Rhea" id="RHEA:76615"/>
        <dbReference type="ChEBI" id="CHEBI:15377"/>
        <dbReference type="ChEBI" id="CHEBI:15378"/>
        <dbReference type="ChEBI" id="CHEBI:17544"/>
        <dbReference type="ChEBI" id="CHEBI:33190"/>
        <dbReference type="ChEBI" id="CHEBI:57287"/>
        <dbReference type="ChEBI" id="CHEBI:57288"/>
        <dbReference type="ChEBI" id="CHEBI:57540"/>
        <dbReference type="ChEBI" id="CHEBI:57945"/>
        <dbReference type="EC" id="1.2.1.27"/>
    </reaction>
    <physiologicalReaction direction="left-to-right" evidence="1">
        <dbReference type="Rhea" id="RHEA:76616"/>
    </physiologicalReaction>
</comment>
<comment type="catalytic activity">
    <reaction evidence="1">
        <text>2-methyl-3-oxopropanoate + NAD(+) + CoA + H2O = propanoyl-CoA + hydrogencarbonate + NADH + H(+)</text>
        <dbReference type="Rhea" id="RHEA:20804"/>
        <dbReference type="ChEBI" id="CHEBI:15377"/>
        <dbReference type="ChEBI" id="CHEBI:15378"/>
        <dbReference type="ChEBI" id="CHEBI:17544"/>
        <dbReference type="ChEBI" id="CHEBI:57287"/>
        <dbReference type="ChEBI" id="CHEBI:57392"/>
        <dbReference type="ChEBI" id="CHEBI:57540"/>
        <dbReference type="ChEBI" id="CHEBI:57700"/>
        <dbReference type="ChEBI" id="CHEBI:57945"/>
        <dbReference type="EC" id="1.2.1.27"/>
    </reaction>
    <physiologicalReaction direction="left-to-right" evidence="1">
        <dbReference type="Rhea" id="RHEA:20805"/>
    </physiologicalReaction>
</comment>
<comment type="pathway">
    <text evidence="1">Polyol metabolism; myo-inositol degradation into acetyl-CoA; acetyl-CoA from myo-inositol: step 7/7.</text>
</comment>
<comment type="subunit">
    <text evidence="1">Homotetramer.</text>
</comment>
<comment type="similarity">
    <text evidence="1">Belongs to the aldehyde dehydrogenase family. IolA subfamily.</text>
</comment>
<organism>
    <name type="scientific">Bacillus thuringiensis subsp. konkukian (strain 97-27)</name>
    <dbReference type="NCBI Taxonomy" id="281309"/>
    <lineage>
        <taxon>Bacteria</taxon>
        <taxon>Bacillati</taxon>
        <taxon>Bacillota</taxon>
        <taxon>Bacilli</taxon>
        <taxon>Bacillales</taxon>
        <taxon>Bacillaceae</taxon>
        <taxon>Bacillus</taxon>
        <taxon>Bacillus cereus group</taxon>
    </lineage>
</organism>
<accession>Q6HIK3</accession>
<sequence length="487" mass="53111">MTVQTAQIVKNYIGGEWVESISTKMEAVYNPATGEVIAQVPLSTKVDVEQAVLAANEAFKSWSKTAVPKRARILFKYQQLLVDNWEELAKLITIENGKSYNEAYGEVLRGIECVEFAAGAPTLMMGKQLPDIATGIESGMYRYPIGVIGGITPFNFPMMVPCWMFPLAIACGNTFVLKPSERTPLLAARLAELAEEAGLPKGVLNIVNGAHDVVNGLLEHKLVKAISFVGSQPVAEYVYKKGTENLKRVQALAGAKNHSIVLNDANLELATKQIISAAFGSAGERCMAASVVTVEEEIADQLVERLVAEANKIVIGNGLDEDVFLGPVIRDNHKERTIGYIDSGVEQGATLVRDGREDTAVKGAGYFVGPTIFDHVTKEMKIWQDEIFAPVLSIVRVKSLDEAIEIANESRFANGACIYTDSGASVRQFRETIESGMLGVNVGVPAPMAFFPFSGWKDSFYGDLHANGTDGVEFYTRKKMLTSRWEK</sequence>
<reference key="1">
    <citation type="journal article" date="2006" name="J. Bacteriol.">
        <title>Pathogenomic sequence analysis of Bacillus cereus and Bacillus thuringiensis isolates closely related to Bacillus anthracis.</title>
        <authorList>
            <person name="Han C.S."/>
            <person name="Xie G."/>
            <person name="Challacombe J.F."/>
            <person name="Altherr M.R."/>
            <person name="Bhotika S.S."/>
            <person name="Bruce D."/>
            <person name="Campbell C.S."/>
            <person name="Campbell M.L."/>
            <person name="Chen J."/>
            <person name="Chertkov O."/>
            <person name="Cleland C."/>
            <person name="Dimitrijevic M."/>
            <person name="Doggett N.A."/>
            <person name="Fawcett J.J."/>
            <person name="Glavina T."/>
            <person name="Goodwin L.A."/>
            <person name="Hill K.K."/>
            <person name="Hitchcock P."/>
            <person name="Jackson P.J."/>
            <person name="Keim P."/>
            <person name="Kewalramani A.R."/>
            <person name="Longmire J."/>
            <person name="Lucas S."/>
            <person name="Malfatti S."/>
            <person name="McMurry K."/>
            <person name="Meincke L.J."/>
            <person name="Misra M."/>
            <person name="Moseman B.L."/>
            <person name="Mundt M."/>
            <person name="Munk A.C."/>
            <person name="Okinaka R.T."/>
            <person name="Parson-Quintana B."/>
            <person name="Reilly L.P."/>
            <person name="Richardson P."/>
            <person name="Robinson D.L."/>
            <person name="Rubin E."/>
            <person name="Saunders E."/>
            <person name="Tapia R."/>
            <person name="Tesmer J.G."/>
            <person name="Thayer N."/>
            <person name="Thompson L.S."/>
            <person name="Tice H."/>
            <person name="Ticknor L.O."/>
            <person name="Wills P.L."/>
            <person name="Brettin T.S."/>
            <person name="Gilna P."/>
        </authorList>
    </citation>
    <scope>NUCLEOTIDE SEQUENCE [LARGE SCALE GENOMIC DNA]</scope>
    <source>
        <strain>97-27</strain>
    </source>
</reference>
<name>IOLA2_BACHK</name>
<feature type="chain" id="PRO_0000352336" description="Malonate-semialdehyde dehydrogenase 2">
    <location>
        <begin position="1"/>
        <end position="487"/>
    </location>
</feature>
<feature type="active site" description="Nucleophile" evidence="1">
    <location>
        <position position="286"/>
    </location>
</feature>
<feature type="binding site" evidence="1">
    <location>
        <position position="154"/>
    </location>
    <ligand>
        <name>NAD(+)</name>
        <dbReference type="ChEBI" id="CHEBI:57540"/>
    </ligand>
</feature>
<feature type="binding site" evidence="1">
    <location>
        <position position="178"/>
    </location>
    <ligand>
        <name>NAD(+)</name>
        <dbReference type="ChEBI" id="CHEBI:57540"/>
    </ligand>
</feature>
<feature type="binding site" evidence="1">
    <location>
        <position position="181"/>
    </location>
    <ligand>
        <name>NAD(+)</name>
        <dbReference type="ChEBI" id="CHEBI:57540"/>
    </ligand>
</feature>
<feature type="binding site" evidence="1">
    <location>
        <position position="182"/>
    </location>
    <ligand>
        <name>NAD(+)</name>
        <dbReference type="ChEBI" id="CHEBI:57540"/>
    </ligand>
</feature>
<feature type="binding site" evidence="1">
    <location>
        <position position="231"/>
    </location>
    <ligand>
        <name>NAD(+)</name>
        <dbReference type="ChEBI" id="CHEBI:57540"/>
    </ligand>
</feature>
<feature type="binding site" evidence="1">
    <location>
        <position position="386"/>
    </location>
    <ligand>
        <name>NAD(+)</name>
        <dbReference type="ChEBI" id="CHEBI:57540"/>
    </ligand>
</feature>
<keyword id="KW-0520">NAD</keyword>
<keyword id="KW-0560">Oxidoreductase</keyword>